<sequence>MSRYTGPSWKRSRRLGISLSGTGKELARRSYIPGQHGPNHRGRLSEYGMQLQEKQKLRWMFGLNERQFRTLFARAGKIREGQHGTNFMILLERRLDNVVYRLGLATTREQARQLVNHGHITVDGKRVDIPSYEVKVGQTISLKEKSKNLQQVKDALEAVASRPSFVSFDEDKMEGQLVRFPERDEMEPEIDEALVVEYYNKLL</sequence>
<proteinExistence type="inferred from homology"/>
<comment type="function">
    <text evidence="1">One of the primary rRNA binding proteins, it binds directly to 16S rRNA where it nucleates assembly of the body of the 30S subunit.</text>
</comment>
<comment type="function">
    <text evidence="1">With S5 and S12 plays an important role in translational accuracy.</text>
</comment>
<comment type="subunit">
    <text evidence="1">Part of the 30S ribosomal subunit. Contacts protein S5. The interaction surface between S4 and S5 is involved in control of translational fidelity.</text>
</comment>
<comment type="similarity">
    <text evidence="1">Belongs to the universal ribosomal protein uS4 family.</text>
</comment>
<organism>
    <name type="scientific">Lactobacillus delbrueckii subsp. bulgaricus (strain ATCC 11842 / DSM 20081 / BCRC 10696 / JCM 1002 / NBRC 13953 / NCIMB 11778 / NCTC 12712 / WDCM 00102 / Lb 14)</name>
    <dbReference type="NCBI Taxonomy" id="390333"/>
    <lineage>
        <taxon>Bacteria</taxon>
        <taxon>Bacillati</taxon>
        <taxon>Bacillota</taxon>
        <taxon>Bacilli</taxon>
        <taxon>Lactobacillales</taxon>
        <taxon>Lactobacillaceae</taxon>
        <taxon>Lactobacillus</taxon>
    </lineage>
</organism>
<gene>
    <name evidence="1" type="primary">rpsD</name>
    <name type="ordered locus">Ldb0722</name>
</gene>
<reference key="1">
    <citation type="journal article" date="2006" name="Proc. Natl. Acad. Sci. U.S.A.">
        <title>The complete genome sequence of Lactobacillus bulgaricus reveals extensive and ongoing reductive evolution.</title>
        <authorList>
            <person name="van de Guchte M."/>
            <person name="Penaud S."/>
            <person name="Grimaldi C."/>
            <person name="Barbe V."/>
            <person name="Bryson K."/>
            <person name="Nicolas P."/>
            <person name="Robert C."/>
            <person name="Oztas S."/>
            <person name="Mangenot S."/>
            <person name="Couloux A."/>
            <person name="Loux V."/>
            <person name="Dervyn R."/>
            <person name="Bossy R."/>
            <person name="Bolotin A."/>
            <person name="Batto J.-M."/>
            <person name="Walunas T."/>
            <person name="Gibrat J.-F."/>
            <person name="Bessieres P."/>
            <person name="Weissenbach J."/>
            <person name="Ehrlich S.D."/>
            <person name="Maguin E."/>
        </authorList>
    </citation>
    <scope>NUCLEOTIDE SEQUENCE [LARGE SCALE GENOMIC DNA]</scope>
    <source>
        <strain>ATCC 11842 / DSM 20081 / BCRC 10696 / JCM 1002 / NBRC 13953 / NCIMB 11778 / NCTC 12712 / WDCM 00102 / Lb 14</strain>
    </source>
</reference>
<keyword id="KW-1185">Reference proteome</keyword>
<keyword id="KW-0687">Ribonucleoprotein</keyword>
<keyword id="KW-0689">Ribosomal protein</keyword>
<keyword id="KW-0694">RNA-binding</keyword>
<keyword id="KW-0699">rRNA-binding</keyword>
<feature type="chain" id="PRO_0000293297" description="Small ribosomal subunit protein uS4">
    <location>
        <begin position="1"/>
        <end position="203"/>
    </location>
</feature>
<feature type="domain" description="S4 RNA-binding" evidence="1">
    <location>
        <begin position="93"/>
        <end position="153"/>
    </location>
</feature>
<dbReference type="EMBL" id="CR954253">
    <property type="protein sequence ID" value="CAI97549.1"/>
    <property type="molecule type" value="Genomic_DNA"/>
</dbReference>
<dbReference type="RefSeq" id="WP_003619125.1">
    <property type="nucleotide sequence ID" value="NZ_JQAV01000001.1"/>
</dbReference>
<dbReference type="SMR" id="Q1GAV4"/>
<dbReference type="STRING" id="390333.Ldb0722"/>
<dbReference type="KEGG" id="ldb:Ldb0722"/>
<dbReference type="eggNOG" id="COG0522">
    <property type="taxonomic scope" value="Bacteria"/>
</dbReference>
<dbReference type="HOGENOM" id="CLU_092403_0_1_9"/>
<dbReference type="BioCyc" id="LDEL390333:LDB_RS03150-MONOMER"/>
<dbReference type="Proteomes" id="UP000001259">
    <property type="component" value="Chromosome"/>
</dbReference>
<dbReference type="GO" id="GO:0015935">
    <property type="term" value="C:small ribosomal subunit"/>
    <property type="evidence" value="ECO:0007669"/>
    <property type="project" value="InterPro"/>
</dbReference>
<dbReference type="GO" id="GO:0019843">
    <property type="term" value="F:rRNA binding"/>
    <property type="evidence" value="ECO:0007669"/>
    <property type="project" value="UniProtKB-UniRule"/>
</dbReference>
<dbReference type="GO" id="GO:0003735">
    <property type="term" value="F:structural constituent of ribosome"/>
    <property type="evidence" value="ECO:0007669"/>
    <property type="project" value="InterPro"/>
</dbReference>
<dbReference type="GO" id="GO:0042274">
    <property type="term" value="P:ribosomal small subunit biogenesis"/>
    <property type="evidence" value="ECO:0007669"/>
    <property type="project" value="TreeGrafter"/>
</dbReference>
<dbReference type="GO" id="GO:0006412">
    <property type="term" value="P:translation"/>
    <property type="evidence" value="ECO:0007669"/>
    <property type="project" value="UniProtKB-UniRule"/>
</dbReference>
<dbReference type="CDD" id="cd00165">
    <property type="entry name" value="S4"/>
    <property type="match status" value="1"/>
</dbReference>
<dbReference type="FunFam" id="3.10.290.10:FF:000001">
    <property type="entry name" value="30S ribosomal protein S4"/>
    <property type="match status" value="1"/>
</dbReference>
<dbReference type="Gene3D" id="1.10.1050.10">
    <property type="entry name" value="Ribosomal Protein S4 Delta 41, Chain A, domain 1"/>
    <property type="match status" value="1"/>
</dbReference>
<dbReference type="Gene3D" id="3.10.290.10">
    <property type="entry name" value="RNA-binding S4 domain"/>
    <property type="match status" value="1"/>
</dbReference>
<dbReference type="HAMAP" id="MF_01306_B">
    <property type="entry name" value="Ribosomal_uS4_B"/>
    <property type="match status" value="1"/>
</dbReference>
<dbReference type="InterPro" id="IPR022801">
    <property type="entry name" value="Ribosomal_uS4"/>
</dbReference>
<dbReference type="InterPro" id="IPR005709">
    <property type="entry name" value="Ribosomal_uS4_bac-type"/>
</dbReference>
<dbReference type="InterPro" id="IPR018079">
    <property type="entry name" value="Ribosomal_uS4_CS"/>
</dbReference>
<dbReference type="InterPro" id="IPR001912">
    <property type="entry name" value="Ribosomal_uS4_N"/>
</dbReference>
<dbReference type="InterPro" id="IPR002942">
    <property type="entry name" value="S4_RNA-bd"/>
</dbReference>
<dbReference type="InterPro" id="IPR036986">
    <property type="entry name" value="S4_RNA-bd_sf"/>
</dbReference>
<dbReference type="NCBIfam" id="NF003717">
    <property type="entry name" value="PRK05327.1"/>
    <property type="match status" value="1"/>
</dbReference>
<dbReference type="NCBIfam" id="TIGR01017">
    <property type="entry name" value="rpsD_bact"/>
    <property type="match status" value="1"/>
</dbReference>
<dbReference type="PANTHER" id="PTHR11831">
    <property type="entry name" value="30S 40S RIBOSOMAL PROTEIN"/>
    <property type="match status" value="1"/>
</dbReference>
<dbReference type="PANTHER" id="PTHR11831:SF4">
    <property type="entry name" value="SMALL RIBOSOMAL SUBUNIT PROTEIN US4M"/>
    <property type="match status" value="1"/>
</dbReference>
<dbReference type="Pfam" id="PF00163">
    <property type="entry name" value="Ribosomal_S4"/>
    <property type="match status" value="1"/>
</dbReference>
<dbReference type="Pfam" id="PF01479">
    <property type="entry name" value="S4"/>
    <property type="match status" value="1"/>
</dbReference>
<dbReference type="SMART" id="SM01390">
    <property type="entry name" value="Ribosomal_S4"/>
    <property type="match status" value="1"/>
</dbReference>
<dbReference type="SMART" id="SM00363">
    <property type="entry name" value="S4"/>
    <property type="match status" value="1"/>
</dbReference>
<dbReference type="SUPFAM" id="SSF55174">
    <property type="entry name" value="Alpha-L RNA-binding motif"/>
    <property type="match status" value="1"/>
</dbReference>
<dbReference type="PROSITE" id="PS00632">
    <property type="entry name" value="RIBOSOMAL_S4"/>
    <property type="match status" value="1"/>
</dbReference>
<dbReference type="PROSITE" id="PS50889">
    <property type="entry name" value="S4"/>
    <property type="match status" value="1"/>
</dbReference>
<name>RS4_LACDA</name>
<evidence type="ECO:0000255" key="1">
    <source>
        <dbReference type="HAMAP-Rule" id="MF_01306"/>
    </source>
</evidence>
<evidence type="ECO:0000305" key="2"/>
<protein>
    <recommendedName>
        <fullName evidence="1">Small ribosomal subunit protein uS4</fullName>
    </recommendedName>
    <alternativeName>
        <fullName evidence="2">30S ribosomal protein S4</fullName>
    </alternativeName>
</protein>
<accession>Q1GAV4</accession>